<organism>
    <name type="scientific">Pseudomonas putida (strain GB-1)</name>
    <dbReference type="NCBI Taxonomy" id="76869"/>
    <lineage>
        <taxon>Bacteria</taxon>
        <taxon>Pseudomonadati</taxon>
        <taxon>Pseudomonadota</taxon>
        <taxon>Gammaproteobacteria</taxon>
        <taxon>Pseudomonadales</taxon>
        <taxon>Pseudomonadaceae</taxon>
        <taxon>Pseudomonas</taxon>
    </lineage>
</organism>
<accession>B0KFZ0</accession>
<keyword id="KW-0997">Cell inner membrane</keyword>
<keyword id="KW-1003">Cell membrane</keyword>
<keyword id="KW-0350">Heme biosynthesis</keyword>
<keyword id="KW-0472">Membrane</keyword>
<keyword id="KW-0808">Transferase</keyword>
<keyword id="KW-0812">Transmembrane</keyword>
<keyword id="KW-1133">Transmembrane helix</keyword>
<reference key="1">
    <citation type="submission" date="2008-01" db="EMBL/GenBank/DDBJ databases">
        <title>Complete sequence of Pseudomonas putida GB-1.</title>
        <authorList>
            <consortium name="US DOE Joint Genome Institute"/>
            <person name="Copeland A."/>
            <person name="Lucas S."/>
            <person name="Lapidus A."/>
            <person name="Barry K."/>
            <person name="Glavina del Rio T."/>
            <person name="Dalin E."/>
            <person name="Tice H."/>
            <person name="Pitluck S."/>
            <person name="Bruce D."/>
            <person name="Goodwin L."/>
            <person name="Chertkov O."/>
            <person name="Brettin T."/>
            <person name="Detter J.C."/>
            <person name="Han C."/>
            <person name="Kuske C.R."/>
            <person name="Schmutz J."/>
            <person name="Larimer F."/>
            <person name="Land M."/>
            <person name="Hauser L."/>
            <person name="Kyrpides N."/>
            <person name="Kim E."/>
            <person name="McCarthy J.K."/>
            <person name="Richardson P."/>
        </authorList>
    </citation>
    <scope>NUCLEOTIDE SEQUENCE [LARGE SCALE GENOMIC DNA]</scope>
    <source>
        <strain>GB-1</strain>
    </source>
</reference>
<name>CYOE1_PSEPG</name>
<comment type="function">
    <text evidence="1">Converts heme B (protoheme IX) to heme O by substitution of the vinyl group on carbon 2 of heme B porphyrin ring with a hydroxyethyl farnesyl side group.</text>
</comment>
<comment type="catalytic activity">
    <reaction evidence="1">
        <text>heme b + (2E,6E)-farnesyl diphosphate + H2O = Fe(II)-heme o + diphosphate</text>
        <dbReference type="Rhea" id="RHEA:28070"/>
        <dbReference type="ChEBI" id="CHEBI:15377"/>
        <dbReference type="ChEBI" id="CHEBI:33019"/>
        <dbReference type="ChEBI" id="CHEBI:60344"/>
        <dbReference type="ChEBI" id="CHEBI:60530"/>
        <dbReference type="ChEBI" id="CHEBI:175763"/>
        <dbReference type="EC" id="2.5.1.141"/>
    </reaction>
</comment>
<comment type="pathway">
    <text evidence="1">Porphyrin-containing compound metabolism; heme O biosynthesis; heme O from protoheme: step 1/1.</text>
</comment>
<comment type="subcellular location">
    <subcellularLocation>
        <location evidence="1">Cell inner membrane</location>
        <topology evidence="1">Multi-pass membrane protein</topology>
    </subcellularLocation>
</comment>
<comment type="miscellaneous">
    <text evidence="1">Carbon 2 of the heme B porphyrin ring is defined according to the Fischer nomenclature.</text>
</comment>
<comment type="similarity">
    <text evidence="1">Belongs to the UbiA prenyltransferase family. Protoheme IX farnesyltransferase subfamily.</text>
</comment>
<proteinExistence type="inferred from homology"/>
<evidence type="ECO:0000255" key="1">
    <source>
        <dbReference type="HAMAP-Rule" id="MF_00154"/>
    </source>
</evidence>
<gene>
    <name evidence="1" type="primary">cyoE1</name>
    <name type="ordered locus">PputGB1_0125</name>
</gene>
<feature type="chain" id="PRO_0000346005" description="Protoheme IX farnesyltransferase 1">
    <location>
        <begin position="1"/>
        <end position="297"/>
    </location>
</feature>
<feature type="transmembrane region" description="Helical" evidence="1">
    <location>
        <begin position="23"/>
        <end position="43"/>
    </location>
</feature>
<feature type="transmembrane region" description="Helical" evidence="1">
    <location>
        <begin position="45"/>
        <end position="65"/>
    </location>
</feature>
<feature type="transmembrane region" description="Helical" evidence="1">
    <location>
        <begin position="93"/>
        <end position="113"/>
    </location>
</feature>
<feature type="transmembrane region" description="Helical" evidence="1">
    <location>
        <begin position="117"/>
        <end position="137"/>
    </location>
</feature>
<feature type="transmembrane region" description="Helical" evidence="1">
    <location>
        <begin position="145"/>
        <end position="165"/>
    </location>
</feature>
<feature type="transmembrane region" description="Helical" evidence="1">
    <location>
        <begin position="171"/>
        <end position="191"/>
    </location>
</feature>
<feature type="transmembrane region" description="Helical" evidence="1">
    <location>
        <begin position="216"/>
        <end position="236"/>
    </location>
</feature>
<feature type="transmembrane region" description="Helical" evidence="1">
    <location>
        <begin position="241"/>
        <end position="261"/>
    </location>
</feature>
<feature type="transmembrane region" description="Helical" evidence="1">
    <location>
        <begin position="277"/>
        <end position="297"/>
    </location>
</feature>
<sequence length="297" mass="32449">MATLLSARRASWRDYLELTKPKVVVLMLITSLAGMFLATRAGVSWSVLLFGNLGIGLCAGGAAVVNHVVDRRIDALMARTHKRPLAQGRVEPLPALLFALALALLGMALLLAFTNALTAWLTLASLLGYAVLYTGFLKRATPQNIVIGGLAGAAPPLLGWVAVSGHVSAEPLLLVLIIFAWTPPHFWALAIHRKEEYAKADIPMLPVTHGERYTKLHILLYTLILLAVSLLPYAIHMSGPLYLACALVLGLRFLQWAWVLYRGSRPHAAIGTFKYSIAYLFALFIALLLDHYLLLNL</sequence>
<protein>
    <recommendedName>
        <fullName evidence="1">Protoheme IX farnesyltransferase 1</fullName>
        <ecNumber evidence="1">2.5.1.141</ecNumber>
    </recommendedName>
    <alternativeName>
        <fullName evidence="1">Heme B farnesyltransferase 1</fullName>
    </alternativeName>
    <alternativeName>
        <fullName evidence="1">Heme O synthase 1</fullName>
    </alternativeName>
</protein>
<dbReference type="EC" id="2.5.1.141" evidence="1"/>
<dbReference type="EMBL" id="CP000926">
    <property type="protein sequence ID" value="ABY96041.1"/>
    <property type="molecule type" value="Genomic_DNA"/>
</dbReference>
<dbReference type="SMR" id="B0KFZ0"/>
<dbReference type="KEGG" id="ppg:PputGB1_0125"/>
<dbReference type="eggNOG" id="COG0109">
    <property type="taxonomic scope" value="Bacteria"/>
</dbReference>
<dbReference type="HOGENOM" id="CLU_029631_0_2_6"/>
<dbReference type="UniPathway" id="UPA00834">
    <property type="reaction ID" value="UER00712"/>
</dbReference>
<dbReference type="Proteomes" id="UP000002157">
    <property type="component" value="Chromosome"/>
</dbReference>
<dbReference type="GO" id="GO:0005886">
    <property type="term" value="C:plasma membrane"/>
    <property type="evidence" value="ECO:0007669"/>
    <property type="project" value="UniProtKB-SubCell"/>
</dbReference>
<dbReference type="GO" id="GO:0008495">
    <property type="term" value="F:protoheme IX farnesyltransferase activity"/>
    <property type="evidence" value="ECO:0007669"/>
    <property type="project" value="UniProtKB-UniRule"/>
</dbReference>
<dbReference type="GO" id="GO:0048034">
    <property type="term" value="P:heme O biosynthetic process"/>
    <property type="evidence" value="ECO:0007669"/>
    <property type="project" value="UniProtKB-UniRule"/>
</dbReference>
<dbReference type="CDD" id="cd13957">
    <property type="entry name" value="PT_UbiA_Cox10"/>
    <property type="match status" value="1"/>
</dbReference>
<dbReference type="FunFam" id="1.10.357.140:FF:000001">
    <property type="entry name" value="Protoheme IX farnesyltransferase"/>
    <property type="match status" value="1"/>
</dbReference>
<dbReference type="Gene3D" id="1.10.357.140">
    <property type="entry name" value="UbiA prenyltransferase"/>
    <property type="match status" value="1"/>
</dbReference>
<dbReference type="HAMAP" id="MF_00154">
    <property type="entry name" value="CyoE_CtaB"/>
    <property type="match status" value="1"/>
</dbReference>
<dbReference type="InterPro" id="IPR006369">
    <property type="entry name" value="Protohaem_IX_farnesylTrfase"/>
</dbReference>
<dbReference type="InterPro" id="IPR000537">
    <property type="entry name" value="UbiA_prenyltransferase"/>
</dbReference>
<dbReference type="InterPro" id="IPR030470">
    <property type="entry name" value="UbiA_prenylTrfase_CS"/>
</dbReference>
<dbReference type="InterPro" id="IPR044878">
    <property type="entry name" value="UbiA_sf"/>
</dbReference>
<dbReference type="NCBIfam" id="TIGR01473">
    <property type="entry name" value="cyoE_ctaB"/>
    <property type="match status" value="1"/>
</dbReference>
<dbReference type="NCBIfam" id="NF003349">
    <property type="entry name" value="PRK04375.1-2"/>
    <property type="match status" value="1"/>
</dbReference>
<dbReference type="PANTHER" id="PTHR43448:SF7">
    <property type="entry name" value="4-HYDROXYBENZOATE SOLANESYLTRANSFERASE"/>
    <property type="match status" value="1"/>
</dbReference>
<dbReference type="PANTHER" id="PTHR43448">
    <property type="entry name" value="PROTOHEME IX FARNESYLTRANSFERASE, MITOCHONDRIAL"/>
    <property type="match status" value="1"/>
</dbReference>
<dbReference type="Pfam" id="PF01040">
    <property type="entry name" value="UbiA"/>
    <property type="match status" value="1"/>
</dbReference>
<dbReference type="PROSITE" id="PS00943">
    <property type="entry name" value="UBIA"/>
    <property type="match status" value="1"/>
</dbReference>